<name>TRMB_MESH2</name>
<keyword id="KW-0489">Methyltransferase</keyword>
<keyword id="KW-0949">S-adenosyl-L-methionine</keyword>
<keyword id="KW-0808">Transferase</keyword>
<keyword id="KW-0819">tRNA processing</keyword>
<gene>
    <name evidence="2" type="primary">trmB</name>
    <name type="ordered locus">mhp463</name>
</gene>
<evidence type="ECO:0000250" key="1"/>
<evidence type="ECO:0000255" key="2">
    <source>
        <dbReference type="HAMAP-Rule" id="MF_01057"/>
    </source>
</evidence>
<protein>
    <recommendedName>
        <fullName evidence="2">tRNA (guanine-N(7)-)-methyltransferase</fullName>
        <ecNumber evidence="2">2.1.1.33</ecNumber>
    </recommendedName>
    <alternativeName>
        <fullName evidence="2">tRNA (guanine(46)-N(7))-methyltransferase</fullName>
    </alternativeName>
    <alternativeName>
        <fullName evidence="2">tRNA(m7G46)-methyltransferase</fullName>
    </alternativeName>
</protein>
<comment type="function">
    <text evidence="2">Catalyzes the formation of N(7)-methylguanine at position 46 (m7G46) in tRNA.</text>
</comment>
<comment type="catalytic activity">
    <reaction evidence="2">
        <text>guanosine(46) in tRNA + S-adenosyl-L-methionine = N(7)-methylguanosine(46) in tRNA + S-adenosyl-L-homocysteine</text>
        <dbReference type="Rhea" id="RHEA:42708"/>
        <dbReference type="Rhea" id="RHEA-COMP:10188"/>
        <dbReference type="Rhea" id="RHEA-COMP:10189"/>
        <dbReference type="ChEBI" id="CHEBI:57856"/>
        <dbReference type="ChEBI" id="CHEBI:59789"/>
        <dbReference type="ChEBI" id="CHEBI:74269"/>
        <dbReference type="ChEBI" id="CHEBI:74480"/>
        <dbReference type="EC" id="2.1.1.33"/>
    </reaction>
</comment>
<comment type="pathway">
    <text evidence="2">tRNA modification; N(7)-methylguanine-tRNA biosynthesis.</text>
</comment>
<comment type="similarity">
    <text evidence="2">Belongs to the class I-like SAM-binding methyltransferase superfamily. TrmB family.</text>
</comment>
<feature type="chain" id="PRO_0000171353" description="tRNA (guanine-N(7)-)-methyltransferase">
    <location>
        <begin position="1"/>
        <end position="201"/>
    </location>
</feature>
<feature type="active site" evidence="1">
    <location>
        <position position="106"/>
    </location>
</feature>
<feature type="binding site" evidence="2">
    <location>
        <position position="33"/>
    </location>
    <ligand>
        <name>S-adenosyl-L-methionine</name>
        <dbReference type="ChEBI" id="CHEBI:59789"/>
    </ligand>
</feature>
<feature type="binding site" evidence="2">
    <location>
        <position position="58"/>
    </location>
    <ligand>
        <name>S-adenosyl-L-methionine</name>
        <dbReference type="ChEBI" id="CHEBI:59789"/>
    </ligand>
</feature>
<feature type="binding site" evidence="2">
    <location>
        <position position="85"/>
    </location>
    <ligand>
        <name>S-adenosyl-L-methionine</name>
        <dbReference type="ChEBI" id="CHEBI:59789"/>
    </ligand>
</feature>
<feature type="binding site" evidence="2">
    <location>
        <position position="106"/>
    </location>
    <ligand>
        <name>S-adenosyl-L-methionine</name>
        <dbReference type="ChEBI" id="CHEBI:59789"/>
    </ligand>
</feature>
<feature type="binding site" evidence="2">
    <location>
        <position position="110"/>
    </location>
    <ligand>
        <name>substrate</name>
    </ligand>
</feature>
<feature type="binding site" evidence="2">
    <location>
        <position position="142"/>
    </location>
    <ligand>
        <name>substrate</name>
    </ligand>
</feature>
<feature type="binding site" evidence="2">
    <location>
        <begin position="180"/>
        <end position="183"/>
    </location>
    <ligand>
        <name>substrate</name>
    </ligand>
</feature>
<dbReference type="EC" id="2.1.1.33" evidence="2"/>
<dbReference type="EMBL" id="AE017332">
    <property type="protein sequence ID" value="AAV27897.1"/>
    <property type="molecule type" value="Genomic_DNA"/>
</dbReference>
<dbReference type="RefSeq" id="WP_011206297.1">
    <property type="nucleotide sequence ID" value="NC_006360.1"/>
</dbReference>
<dbReference type="SMR" id="Q600J2"/>
<dbReference type="KEGG" id="mhy:mhp463"/>
<dbReference type="eggNOG" id="COG0220">
    <property type="taxonomic scope" value="Bacteria"/>
</dbReference>
<dbReference type="HOGENOM" id="CLU_050910_2_1_14"/>
<dbReference type="PhylomeDB" id="Q600J2"/>
<dbReference type="UniPathway" id="UPA00989"/>
<dbReference type="Proteomes" id="UP000006822">
    <property type="component" value="Chromosome"/>
</dbReference>
<dbReference type="GO" id="GO:0043527">
    <property type="term" value="C:tRNA methyltransferase complex"/>
    <property type="evidence" value="ECO:0007669"/>
    <property type="project" value="TreeGrafter"/>
</dbReference>
<dbReference type="GO" id="GO:0008176">
    <property type="term" value="F:tRNA (guanine(46)-N7)-methyltransferase activity"/>
    <property type="evidence" value="ECO:0007669"/>
    <property type="project" value="UniProtKB-UniRule"/>
</dbReference>
<dbReference type="CDD" id="cd02440">
    <property type="entry name" value="AdoMet_MTases"/>
    <property type="match status" value="1"/>
</dbReference>
<dbReference type="Gene3D" id="3.40.50.150">
    <property type="entry name" value="Vaccinia Virus protein VP39"/>
    <property type="match status" value="1"/>
</dbReference>
<dbReference type="HAMAP" id="MF_01057">
    <property type="entry name" value="tRNA_methyltr_TrmB"/>
    <property type="match status" value="1"/>
</dbReference>
<dbReference type="InterPro" id="IPR029063">
    <property type="entry name" value="SAM-dependent_MTases_sf"/>
</dbReference>
<dbReference type="InterPro" id="IPR003358">
    <property type="entry name" value="tRNA_(Gua-N-7)_MeTrfase_Trmb"/>
</dbReference>
<dbReference type="InterPro" id="IPR055361">
    <property type="entry name" value="tRNA_methyltr_TrmB_bact"/>
</dbReference>
<dbReference type="NCBIfam" id="NF001080">
    <property type="entry name" value="PRK00121.2-2"/>
    <property type="match status" value="1"/>
</dbReference>
<dbReference type="NCBIfam" id="TIGR00091">
    <property type="entry name" value="tRNA (guanosine(46)-N7)-methyltransferase TrmB"/>
    <property type="match status" value="1"/>
</dbReference>
<dbReference type="PANTHER" id="PTHR23417">
    <property type="entry name" value="3-DEOXY-D-MANNO-OCTULOSONIC-ACID TRANSFERASE/TRNA GUANINE-N 7 - -METHYLTRANSFERASE"/>
    <property type="match status" value="1"/>
</dbReference>
<dbReference type="PANTHER" id="PTHR23417:SF14">
    <property type="entry name" value="PENTACOTRIPEPTIDE-REPEAT REGION OF PRORP DOMAIN-CONTAINING PROTEIN"/>
    <property type="match status" value="1"/>
</dbReference>
<dbReference type="Pfam" id="PF02390">
    <property type="entry name" value="Methyltransf_4"/>
    <property type="match status" value="1"/>
</dbReference>
<dbReference type="SUPFAM" id="SSF53335">
    <property type="entry name" value="S-adenosyl-L-methionine-dependent methyltransferases"/>
    <property type="match status" value="1"/>
</dbReference>
<dbReference type="PROSITE" id="PS51625">
    <property type="entry name" value="SAM_MT_TRMB"/>
    <property type="match status" value="1"/>
</dbReference>
<reference key="1">
    <citation type="journal article" date="2004" name="J. Bacteriol.">
        <title>The genome sequence of Mycoplasma hyopneumoniae strain 232, the agent of swine mycoplasmosis.</title>
        <authorList>
            <person name="Minion F.C."/>
            <person name="Lefkowitz E.J."/>
            <person name="Madsen M.L."/>
            <person name="Cleary B.J."/>
            <person name="Swartzell S.M."/>
            <person name="Mahairas G.G."/>
        </authorList>
    </citation>
    <scope>NUCLEOTIDE SEQUENCE [LARGE SCALE GENOMIC DNA]</scope>
    <source>
        <strain>232</strain>
    </source>
</reference>
<organism>
    <name type="scientific">Mesomycoplasma hyopneumoniae (strain 232)</name>
    <name type="common">Mycoplasma hyopneumoniae</name>
    <dbReference type="NCBI Taxonomy" id="295358"/>
    <lineage>
        <taxon>Bacteria</taxon>
        <taxon>Bacillati</taxon>
        <taxon>Mycoplasmatota</taxon>
        <taxon>Mycoplasmoidales</taxon>
        <taxon>Metamycoplasmataceae</taxon>
        <taxon>Mesomycoplasma</taxon>
    </lineage>
</organism>
<proteinExistence type="inferred from homology"/>
<accession>Q600J2</accession>
<sequence>MRLRNIPDALERIQNQNLLVKTPWNIDDSWIIEIGMGKGKMISQLAFDNPNKNFLGVEKYPSAAVKSIKYVKKYNLSNFFILISDAKDLLDQIKGKASTIWLTFPDPWPKNRHYKRRLTYKDFLKIYANLLVKDGILKLKTDNLKFFEFSIESLKENGWKITYQTNDLHNSLVNSSNIKTTYEEKWVNLNYKIHYLEAIFI</sequence>